<sequence length="83" mass="9327">MKILIFIIASFMLIGVWCKEGYPMGRDGCKIPCALNHKFCKTECQAKWKGSDGYCYSTGMSCYCTNLPENAEVWDPNNNKCVG</sequence>
<reference evidence="8" key="1">
    <citation type="journal article" date="2011" name="Toxicon">
        <title>Biochemical and molecular characterization of the venom from the Cuban scorpion Rhopalurus junceus.</title>
        <authorList>
            <person name="Garcia-Gomez B.I."/>
            <person name="Coronas F.I."/>
            <person name="Restano-Cassulini R."/>
            <person name="Rodriguez R.R."/>
            <person name="Possani L.D."/>
        </authorList>
    </citation>
    <scope>NUCLEOTIDE SEQUENCE [MRNA]</scope>
    <source>
        <tissue evidence="8">Venom gland</tissue>
    </source>
</reference>
<keyword id="KW-1015">Disulfide bond</keyword>
<keyword id="KW-0872">Ion channel impairing toxin</keyword>
<keyword id="KW-0528">Neurotoxin</keyword>
<keyword id="KW-0964">Secreted</keyword>
<keyword id="KW-0732">Signal</keyword>
<keyword id="KW-0800">Toxin</keyword>
<keyword id="KW-0738">Voltage-gated sodium channel impairing toxin</keyword>
<organism>
    <name type="scientific">Rhopalurus junceus</name>
    <name type="common">Caribbean blue scorpion</name>
    <dbReference type="NCBI Taxonomy" id="419285"/>
    <lineage>
        <taxon>Eukaryota</taxon>
        <taxon>Metazoa</taxon>
        <taxon>Ecdysozoa</taxon>
        <taxon>Arthropoda</taxon>
        <taxon>Chelicerata</taxon>
        <taxon>Arachnida</taxon>
        <taxon>Scorpiones</taxon>
        <taxon>Buthida</taxon>
        <taxon>Buthoidea</taxon>
        <taxon>Buthidae</taxon>
        <taxon>Rhopalurus</taxon>
    </lineage>
</organism>
<dbReference type="EMBL" id="HM233952">
    <property type="protein sequence ID" value="ADV16830.1"/>
    <property type="molecule type" value="mRNA"/>
</dbReference>
<dbReference type="SMR" id="E7CLP3"/>
<dbReference type="GO" id="GO:0005576">
    <property type="term" value="C:extracellular region"/>
    <property type="evidence" value="ECO:0007669"/>
    <property type="project" value="UniProtKB-SubCell"/>
</dbReference>
<dbReference type="GO" id="GO:0019871">
    <property type="term" value="F:sodium channel inhibitor activity"/>
    <property type="evidence" value="ECO:0007669"/>
    <property type="project" value="InterPro"/>
</dbReference>
<dbReference type="GO" id="GO:0090729">
    <property type="term" value="F:toxin activity"/>
    <property type="evidence" value="ECO:0007669"/>
    <property type="project" value="UniProtKB-KW"/>
</dbReference>
<dbReference type="GO" id="GO:0006952">
    <property type="term" value="P:defense response"/>
    <property type="evidence" value="ECO:0007669"/>
    <property type="project" value="InterPro"/>
</dbReference>
<dbReference type="CDD" id="cd23106">
    <property type="entry name" value="neurotoxins_LC_scorpion"/>
    <property type="match status" value="1"/>
</dbReference>
<dbReference type="FunFam" id="3.30.30.10:FF:000002">
    <property type="entry name" value="Alpha-like toxin BmK-M1"/>
    <property type="match status" value="1"/>
</dbReference>
<dbReference type="Gene3D" id="3.30.30.10">
    <property type="entry name" value="Knottin, scorpion toxin-like"/>
    <property type="match status" value="1"/>
</dbReference>
<dbReference type="InterPro" id="IPR044062">
    <property type="entry name" value="LCN-type_CS_alpha_beta_dom"/>
</dbReference>
<dbReference type="InterPro" id="IPR003614">
    <property type="entry name" value="Scorpion_toxin-like"/>
</dbReference>
<dbReference type="InterPro" id="IPR036574">
    <property type="entry name" value="Scorpion_toxin-like_sf"/>
</dbReference>
<dbReference type="InterPro" id="IPR018218">
    <property type="entry name" value="Scorpion_toxinL"/>
</dbReference>
<dbReference type="InterPro" id="IPR002061">
    <property type="entry name" value="Scorpion_toxinL/defensin"/>
</dbReference>
<dbReference type="Pfam" id="PF00537">
    <property type="entry name" value="Toxin_3"/>
    <property type="match status" value="1"/>
</dbReference>
<dbReference type="PRINTS" id="PR00285">
    <property type="entry name" value="SCORPNTOXIN"/>
</dbReference>
<dbReference type="SMART" id="SM00505">
    <property type="entry name" value="Knot1"/>
    <property type="match status" value="1"/>
</dbReference>
<dbReference type="SUPFAM" id="SSF57095">
    <property type="entry name" value="Scorpion toxin-like"/>
    <property type="match status" value="1"/>
</dbReference>
<dbReference type="PROSITE" id="PS51863">
    <property type="entry name" value="LCN_CSAB"/>
    <property type="match status" value="1"/>
</dbReference>
<accession>E7CLP3</accession>
<proteinExistence type="inferred from homology"/>
<comment type="function">
    <text evidence="1">Beta toxins bind voltage-independently at site-4 of sodium channels (Nav) and shift the voltage of activation toward more negative potentials thereby affecting sodium channel activation and promoting spontaneous and repetitive firing.</text>
</comment>
<comment type="subcellular location">
    <subcellularLocation>
        <location evidence="2">Secreted</location>
    </subcellularLocation>
</comment>
<comment type="tissue specificity">
    <text evidence="7">Expressed by the venom gland.</text>
</comment>
<comment type="domain">
    <text evidence="6">Has the structural arrangement of an alpha-helix connected to antiparallel beta-sheets by disulfide bonds (CS-alpha/beta).</text>
</comment>
<comment type="similarity">
    <text evidence="4">Belongs to the long (4 C-C) scorpion toxin superfamily. Sodium channel inhibitor family. Beta subfamily.</text>
</comment>
<protein>
    <recommendedName>
        <fullName evidence="3">Putative beta-neurotoxin RjAa10f</fullName>
    </recommendedName>
</protein>
<feature type="signal peptide" evidence="4">
    <location>
        <begin position="1"/>
        <end position="18"/>
    </location>
</feature>
<feature type="chain" id="PRO_0000413463" description="Putative beta-neurotoxin RjAa10f" evidence="4">
    <location>
        <begin position="19"/>
        <end position="83"/>
    </location>
</feature>
<feature type="domain" description="LCN-type CS-alpha/beta" evidence="5">
    <location>
        <begin position="19"/>
        <end position="82"/>
    </location>
</feature>
<feature type="disulfide bond" evidence="5">
    <location>
        <begin position="29"/>
        <end position="81"/>
    </location>
</feature>
<feature type="disulfide bond" evidence="5">
    <location>
        <begin position="33"/>
        <end position="55"/>
    </location>
</feature>
<feature type="disulfide bond" evidence="5">
    <location>
        <begin position="40"/>
        <end position="62"/>
    </location>
</feature>
<feature type="disulfide bond" evidence="5">
    <location>
        <begin position="44"/>
        <end position="64"/>
    </location>
</feature>
<evidence type="ECO:0000250" key="1"/>
<evidence type="ECO:0000250" key="2">
    <source>
        <dbReference type="UniProtKB" id="P15226"/>
    </source>
</evidence>
<evidence type="ECO:0000250" key="3">
    <source>
        <dbReference type="UniProtKB" id="Q1I176"/>
    </source>
</evidence>
<evidence type="ECO:0000255" key="4"/>
<evidence type="ECO:0000255" key="5">
    <source>
        <dbReference type="PROSITE-ProRule" id="PRU01210"/>
    </source>
</evidence>
<evidence type="ECO:0000305" key="6"/>
<evidence type="ECO:0000305" key="7">
    <source>
    </source>
</evidence>
<evidence type="ECO:0000312" key="8">
    <source>
        <dbReference type="EMBL" id="ADV16830.1"/>
    </source>
</evidence>
<name>SX10F_RHOJU</name>